<keyword id="KW-0028">Amino-acid biosynthesis</keyword>
<keyword id="KW-0100">Branched-chain amino acid biosynthesis</keyword>
<keyword id="KW-0460">Magnesium</keyword>
<keyword id="KW-0479">Metal-binding</keyword>
<keyword id="KW-0521">NADP</keyword>
<keyword id="KW-0560">Oxidoreductase</keyword>
<keyword id="KW-1185">Reference proteome</keyword>
<dbReference type="EC" id="1.1.1.86" evidence="1"/>
<dbReference type="EMBL" id="BA000043">
    <property type="protein sequence ID" value="BAD76944.1"/>
    <property type="molecule type" value="Genomic_DNA"/>
</dbReference>
<dbReference type="RefSeq" id="WP_011232135.1">
    <property type="nucleotide sequence ID" value="NC_006510.1"/>
</dbReference>
<dbReference type="SMR" id="Q5KWJ2"/>
<dbReference type="STRING" id="235909.GK2659"/>
<dbReference type="KEGG" id="gka:GK2659"/>
<dbReference type="eggNOG" id="COG0059">
    <property type="taxonomic scope" value="Bacteria"/>
</dbReference>
<dbReference type="HOGENOM" id="CLU_033821_0_1_9"/>
<dbReference type="UniPathway" id="UPA00047">
    <property type="reaction ID" value="UER00056"/>
</dbReference>
<dbReference type="UniPathway" id="UPA00049">
    <property type="reaction ID" value="UER00060"/>
</dbReference>
<dbReference type="Proteomes" id="UP000001172">
    <property type="component" value="Chromosome"/>
</dbReference>
<dbReference type="GO" id="GO:0005829">
    <property type="term" value="C:cytosol"/>
    <property type="evidence" value="ECO:0007669"/>
    <property type="project" value="TreeGrafter"/>
</dbReference>
<dbReference type="GO" id="GO:0004455">
    <property type="term" value="F:ketol-acid reductoisomerase activity"/>
    <property type="evidence" value="ECO:0007669"/>
    <property type="project" value="UniProtKB-UniRule"/>
</dbReference>
<dbReference type="GO" id="GO:0000287">
    <property type="term" value="F:magnesium ion binding"/>
    <property type="evidence" value="ECO:0007669"/>
    <property type="project" value="UniProtKB-UniRule"/>
</dbReference>
<dbReference type="GO" id="GO:0050661">
    <property type="term" value="F:NADP binding"/>
    <property type="evidence" value="ECO:0007669"/>
    <property type="project" value="InterPro"/>
</dbReference>
<dbReference type="GO" id="GO:0009097">
    <property type="term" value="P:isoleucine biosynthetic process"/>
    <property type="evidence" value="ECO:0007669"/>
    <property type="project" value="UniProtKB-UniRule"/>
</dbReference>
<dbReference type="GO" id="GO:0009099">
    <property type="term" value="P:L-valine biosynthetic process"/>
    <property type="evidence" value="ECO:0007669"/>
    <property type="project" value="UniProtKB-UniRule"/>
</dbReference>
<dbReference type="FunFam" id="3.40.50.720:FF:000023">
    <property type="entry name" value="Ketol-acid reductoisomerase (NADP(+))"/>
    <property type="match status" value="1"/>
</dbReference>
<dbReference type="Gene3D" id="6.10.240.10">
    <property type="match status" value="1"/>
</dbReference>
<dbReference type="Gene3D" id="3.40.50.720">
    <property type="entry name" value="NAD(P)-binding Rossmann-like Domain"/>
    <property type="match status" value="1"/>
</dbReference>
<dbReference type="HAMAP" id="MF_00435">
    <property type="entry name" value="IlvC"/>
    <property type="match status" value="1"/>
</dbReference>
<dbReference type="InterPro" id="IPR008927">
    <property type="entry name" value="6-PGluconate_DH-like_C_sf"/>
</dbReference>
<dbReference type="InterPro" id="IPR013023">
    <property type="entry name" value="KARI"/>
</dbReference>
<dbReference type="InterPro" id="IPR000506">
    <property type="entry name" value="KARI_C"/>
</dbReference>
<dbReference type="InterPro" id="IPR013116">
    <property type="entry name" value="KARI_N"/>
</dbReference>
<dbReference type="InterPro" id="IPR014359">
    <property type="entry name" value="KARI_prok"/>
</dbReference>
<dbReference type="InterPro" id="IPR036291">
    <property type="entry name" value="NAD(P)-bd_dom_sf"/>
</dbReference>
<dbReference type="NCBIfam" id="TIGR00465">
    <property type="entry name" value="ilvC"/>
    <property type="match status" value="1"/>
</dbReference>
<dbReference type="NCBIfam" id="NF004017">
    <property type="entry name" value="PRK05479.1"/>
    <property type="match status" value="1"/>
</dbReference>
<dbReference type="NCBIfam" id="NF009940">
    <property type="entry name" value="PRK13403.1"/>
    <property type="match status" value="1"/>
</dbReference>
<dbReference type="PANTHER" id="PTHR21371">
    <property type="entry name" value="KETOL-ACID REDUCTOISOMERASE, MITOCHONDRIAL"/>
    <property type="match status" value="1"/>
</dbReference>
<dbReference type="PANTHER" id="PTHR21371:SF1">
    <property type="entry name" value="KETOL-ACID REDUCTOISOMERASE, MITOCHONDRIAL"/>
    <property type="match status" value="1"/>
</dbReference>
<dbReference type="Pfam" id="PF01450">
    <property type="entry name" value="KARI_C"/>
    <property type="match status" value="1"/>
</dbReference>
<dbReference type="Pfam" id="PF07991">
    <property type="entry name" value="KARI_N"/>
    <property type="match status" value="1"/>
</dbReference>
<dbReference type="PIRSF" id="PIRSF000116">
    <property type="entry name" value="IlvC_gammaproteo"/>
    <property type="match status" value="1"/>
</dbReference>
<dbReference type="SUPFAM" id="SSF48179">
    <property type="entry name" value="6-phosphogluconate dehydrogenase C-terminal domain-like"/>
    <property type="match status" value="1"/>
</dbReference>
<dbReference type="SUPFAM" id="SSF51735">
    <property type="entry name" value="NAD(P)-binding Rossmann-fold domains"/>
    <property type="match status" value="1"/>
</dbReference>
<dbReference type="PROSITE" id="PS51851">
    <property type="entry name" value="KARI_C"/>
    <property type="match status" value="1"/>
</dbReference>
<dbReference type="PROSITE" id="PS51850">
    <property type="entry name" value="KARI_N"/>
    <property type="match status" value="1"/>
</dbReference>
<sequence length="341" mass="37676">MAKVYYNGDANEQYLQGKTVAIIGYGSQGHAHAQNLRDSGVRVIVGLRKGKSWEQAEQDGFEVYSVREAAKQADIVMVLLPDEKQPAVYKEEIEPELEPGNALVFAHGFNIHFSQIVPPNHVDVFLVAPKGPGHLVRRTYTEGAGVPALIAVYQDVTGHARETALAYAKAIGAARAGVLETTFKEETETDLFGEQAVLCGGLTALIKAGFETLVEAGYQPEVAYFECLHEMKLIVDLLYEGGLSWMRYSISDTAQWGDFITGPRIINDAVKAEMKKVLDDIQTGKFAKSWILENQANRPEFNAINRRENEHLIEIVGRELRSMMPFVKAKQVEAVVPGAKN</sequence>
<gene>
    <name evidence="1" type="primary">ilvC</name>
    <name type="ordered locus">GK2659</name>
</gene>
<proteinExistence type="inferred from homology"/>
<protein>
    <recommendedName>
        <fullName evidence="1">Ketol-acid reductoisomerase (NADP(+))</fullName>
        <shortName evidence="1">KARI</shortName>
        <ecNumber evidence="1">1.1.1.86</ecNumber>
    </recommendedName>
    <alternativeName>
        <fullName evidence="1">Acetohydroxy-acid isomeroreductase</fullName>
        <shortName evidence="1">AHIR</shortName>
    </alternativeName>
    <alternativeName>
        <fullName evidence="1">Alpha-keto-beta-hydroxylacyl reductoisomerase</fullName>
    </alternativeName>
    <alternativeName>
        <fullName evidence="1">Ketol-acid reductoisomerase type 1</fullName>
    </alternativeName>
    <alternativeName>
        <fullName evidence="1">Ketol-acid reductoisomerase type I</fullName>
    </alternativeName>
</protein>
<feature type="chain" id="PRO_0000226178" description="Ketol-acid reductoisomerase (NADP(+))">
    <location>
        <begin position="1"/>
        <end position="341"/>
    </location>
</feature>
<feature type="domain" description="KARI N-terminal Rossmann" evidence="2">
    <location>
        <begin position="2"/>
        <end position="181"/>
    </location>
</feature>
<feature type="domain" description="KARI C-terminal knotted" evidence="3">
    <location>
        <begin position="182"/>
        <end position="327"/>
    </location>
</feature>
<feature type="active site" evidence="1">
    <location>
        <position position="107"/>
    </location>
</feature>
<feature type="binding site" evidence="1">
    <location>
        <begin position="25"/>
        <end position="28"/>
    </location>
    <ligand>
        <name>NADP(+)</name>
        <dbReference type="ChEBI" id="CHEBI:58349"/>
    </ligand>
</feature>
<feature type="binding site" evidence="1">
    <location>
        <position position="48"/>
    </location>
    <ligand>
        <name>NADP(+)</name>
        <dbReference type="ChEBI" id="CHEBI:58349"/>
    </ligand>
</feature>
<feature type="binding site" evidence="1">
    <location>
        <position position="52"/>
    </location>
    <ligand>
        <name>NADP(+)</name>
        <dbReference type="ChEBI" id="CHEBI:58349"/>
    </ligand>
</feature>
<feature type="binding site" evidence="1">
    <location>
        <begin position="82"/>
        <end position="85"/>
    </location>
    <ligand>
        <name>NADP(+)</name>
        <dbReference type="ChEBI" id="CHEBI:58349"/>
    </ligand>
</feature>
<feature type="binding site" evidence="1">
    <location>
        <position position="133"/>
    </location>
    <ligand>
        <name>NADP(+)</name>
        <dbReference type="ChEBI" id="CHEBI:58349"/>
    </ligand>
</feature>
<feature type="binding site" evidence="1">
    <location>
        <position position="190"/>
    </location>
    <ligand>
        <name>Mg(2+)</name>
        <dbReference type="ChEBI" id="CHEBI:18420"/>
        <label>1</label>
    </ligand>
</feature>
<feature type="binding site" evidence="1">
    <location>
        <position position="190"/>
    </location>
    <ligand>
        <name>Mg(2+)</name>
        <dbReference type="ChEBI" id="CHEBI:18420"/>
        <label>2</label>
    </ligand>
</feature>
<feature type="binding site" evidence="1">
    <location>
        <position position="194"/>
    </location>
    <ligand>
        <name>Mg(2+)</name>
        <dbReference type="ChEBI" id="CHEBI:18420"/>
        <label>1</label>
    </ligand>
</feature>
<feature type="binding site" evidence="1">
    <location>
        <position position="226"/>
    </location>
    <ligand>
        <name>Mg(2+)</name>
        <dbReference type="ChEBI" id="CHEBI:18420"/>
        <label>2</label>
    </ligand>
</feature>
<feature type="binding site" evidence="1">
    <location>
        <position position="230"/>
    </location>
    <ligand>
        <name>Mg(2+)</name>
        <dbReference type="ChEBI" id="CHEBI:18420"/>
        <label>2</label>
    </ligand>
</feature>
<feature type="binding site" evidence="1">
    <location>
        <position position="251"/>
    </location>
    <ligand>
        <name>substrate</name>
    </ligand>
</feature>
<comment type="function">
    <text evidence="1">Involved in the biosynthesis of branched-chain amino acids (BCAA). Catalyzes an alkyl-migration followed by a ketol-acid reduction of (S)-2-acetolactate (S2AL) to yield (R)-2,3-dihydroxy-isovalerate. In the isomerase reaction, S2AL is rearranged via a Mg-dependent methyl migration to produce 3-hydroxy-3-methyl-2-ketobutyrate (HMKB). In the reductase reaction, this 2-ketoacid undergoes a metal-dependent reduction by NADPH to yield (R)-2,3-dihydroxy-isovalerate.</text>
</comment>
<comment type="catalytic activity">
    <reaction evidence="1">
        <text>(2R)-2,3-dihydroxy-3-methylbutanoate + NADP(+) = (2S)-2-acetolactate + NADPH + H(+)</text>
        <dbReference type="Rhea" id="RHEA:22068"/>
        <dbReference type="ChEBI" id="CHEBI:15378"/>
        <dbReference type="ChEBI" id="CHEBI:49072"/>
        <dbReference type="ChEBI" id="CHEBI:57783"/>
        <dbReference type="ChEBI" id="CHEBI:58349"/>
        <dbReference type="ChEBI" id="CHEBI:58476"/>
        <dbReference type="EC" id="1.1.1.86"/>
    </reaction>
</comment>
<comment type="catalytic activity">
    <reaction evidence="1">
        <text>(2R,3R)-2,3-dihydroxy-3-methylpentanoate + NADP(+) = (S)-2-ethyl-2-hydroxy-3-oxobutanoate + NADPH + H(+)</text>
        <dbReference type="Rhea" id="RHEA:13493"/>
        <dbReference type="ChEBI" id="CHEBI:15378"/>
        <dbReference type="ChEBI" id="CHEBI:49256"/>
        <dbReference type="ChEBI" id="CHEBI:49258"/>
        <dbReference type="ChEBI" id="CHEBI:57783"/>
        <dbReference type="ChEBI" id="CHEBI:58349"/>
        <dbReference type="EC" id="1.1.1.86"/>
    </reaction>
</comment>
<comment type="cofactor">
    <cofactor evidence="1">
        <name>Mg(2+)</name>
        <dbReference type="ChEBI" id="CHEBI:18420"/>
    </cofactor>
    <text evidence="1">Binds 2 magnesium ions per subunit.</text>
</comment>
<comment type="pathway">
    <text evidence="1">Amino-acid biosynthesis; L-isoleucine biosynthesis; L-isoleucine from 2-oxobutanoate: step 2/4.</text>
</comment>
<comment type="pathway">
    <text evidence="1">Amino-acid biosynthesis; L-valine biosynthesis; L-valine from pyruvate: step 2/4.</text>
</comment>
<comment type="similarity">
    <text evidence="1">Belongs to the ketol-acid reductoisomerase family.</text>
</comment>
<name>ILVC_GEOKA</name>
<reference key="1">
    <citation type="journal article" date="2004" name="Nucleic Acids Res.">
        <title>Thermoadaptation trait revealed by the genome sequence of thermophilic Geobacillus kaustophilus.</title>
        <authorList>
            <person name="Takami H."/>
            <person name="Takaki Y."/>
            <person name="Chee G.-J."/>
            <person name="Nishi S."/>
            <person name="Shimamura S."/>
            <person name="Suzuki H."/>
            <person name="Matsui S."/>
            <person name="Uchiyama I."/>
        </authorList>
    </citation>
    <scope>NUCLEOTIDE SEQUENCE [LARGE SCALE GENOMIC DNA]</scope>
    <source>
        <strain>HTA426</strain>
    </source>
</reference>
<organism>
    <name type="scientific">Geobacillus kaustophilus (strain HTA426)</name>
    <dbReference type="NCBI Taxonomy" id="235909"/>
    <lineage>
        <taxon>Bacteria</taxon>
        <taxon>Bacillati</taxon>
        <taxon>Bacillota</taxon>
        <taxon>Bacilli</taxon>
        <taxon>Bacillales</taxon>
        <taxon>Anoxybacillaceae</taxon>
        <taxon>Geobacillus</taxon>
        <taxon>Geobacillus thermoleovorans group</taxon>
    </lineage>
</organism>
<accession>Q5KWJ2</accession>
<evidence type="ECO:0000255" key="1">
    <source>
        <dbReference type="HAMAP-Rule" id="MF_00435"/>
    </source>
</evidence>
<evidence type="ECO:0000255" key="2">
    <source>
        <dbReference type="PROSITE-ProRule" id="PRU01197"/>
    </source>
</evidence>
<evidence type="ECO:0000255" key="3">
    <source>
        <dbReference type="PROSITE-ProRule" id="PRU01198"/>
    </source>
</evidence>